<protein>
    <recommendedName>
        <fullName evidence="1">Large ribosomal subunit protein bL9</fullName>
    </recommendedName>
    <alternativeName>
        <fullName evidence="2">50S ribosomal protein L9</fullName>
    </alternativeName>
</protein>
<name>RL9_PROMA</name>
<dbReference type="EMBL" id="AE017126">
    <property type="protein sequence ID" value="AAQ00878.1"/>
    <property type="molecule type" value="Genomic_DNA"/>
</dbReference>
<dbReference type="RefSeq" id="NP_876225.1">
    <property type="nucleotide sequence ID" value="NC_005042.1"/>
</dbReference>
<dbReference type="RefSeq" id="WP_011125983.1">
    <property type="nucleotide sequence ID" value="NC_005042.1"/>
</dbReference>
<dbReference type="SMR" id="Q7V9J9"/>
<dbReference type="STRING" id="167539.Pro_1834"/>
<dbReference type="EnsemblBacteria" id="AAQ00878">
    <property type="protein sequence ID" value="AAQ00878"/>
    <property type="gene ID" value="Pro_1834"/>
</dbReference>
<dbReference type="KEGG" id="pma:Pro_1834"/>
<dbReference type="PATRIC" id="fig|167539.5.peg.1936"/>
<dbReference type="eggNOG" id="COG0359">
    <property type="taxonomic scope" value="Bacteria"/>
</dbReference>
<dbReference type="HOGENOM" id="CLU_078938_3_0_3"/>
<dbReference type="OrthoDB" id="9788336at2"/>
<dbReference type="Proteomes" id="UP000001420">
    <property type="component" value="Chromosome"/>
</dbReference>
<dbReference type="GO" id="GO:1990904">
    <property type="term" value="C:ribonucleoprotein complex"/>
    <property type="evidence" value="ECO:0007669"/>
    <property type="project" value="UniProtKB-KW"/>
</dbReference>
<dbReference type="GO" id="GO:0005840">
    <property type="term" value="C:ribosome"/>
    <property type="evidence" value="ECO:0007669"/>
    <property type="project" value="UniProtKB-KW"/>
</dbReference>
<dbReference type="GO" id="GO:0019843">
    <property type="term" value="F:rRNA binding"/>
    <property type="evidence" value="ECO:0007669"/>
    <property type="project" value="UniProtKB-UniRule"/>
</dbReference>
<dbReference type="GO" id="GO:0003735">
    <property type="term" value="F:structural constituent of ribosome"/>
    <property type="evidence" value="ECO:0007669"/>
    <property type="project" value="InterPro"/>
</dbReference>
<dbReference type="GO" id="GO:0006412">
    <property type="term" value="P:translation"/>
    <property type="evidence" value="ECO:0007669"/>
    <property type="project" value="UniProtKB-UniRule"/>
</dbReference>
<dbReference type="Gene3D" id="3.10.430.100">
    <property type="entry name" value="Ribosomal protein L9, C-terminal domain"/>
    <property type="match status" value="1"/>
</dbReference>
<dbReference type="Gene3D" id="3.40.5.10">
    <property type="entry name" value="Ribosomal protein L9, N-terminal domain"/>
    <property type="match status" value="1"/>
</dbReference>
<dbReference type="HAMAP" id="MF_00503">
    <property type="entry name" value="Ribosomal_bL9"/>
    <property type="match status" value="1"/>
</dbReference>
<dbReference type="InterPro" id="IPR000244">
    <property type="entry name" value="Ribosomal_bL9"/>
</dbReference>
<dbReference type="InterPro" id="IPR009027">
    <property type="entry name" value="Ribosomal_bL9/RNase_H1_N"/>
</dbReference>
<dbReference type="InterPro" id="IPR020594">
    <property type="entry name" value="Ribosomal_bL9_bac/chp"/>
</dbReference>
<dbReference type="InterPro" id="IPR020069">
    <property type="entry name" value="Ribosomal_bL9_C"/>
</dbReference>
<dbReference type="InterPro" id="IPR036791">
    <property type="entry name" value="Ribosomal_bL9_C_sf"/>
</dbReference>
<dbReference type="InterPro" id="IPR020070">
    <property type="entry name" value="Ribosomal_bL9_N"/>
</dbReference>
<dbReference type="InterPro" id="IPR036935">
    <property type="entry name" value="Ribosomal_bL9_N_sf"/>
</dbReference>
<dbReference type="NCBIfam" id="TIGR00158">
    <property type="entry name" value="L9"/>
    <property type="match status" value="1"/>
</dbReference>
<dbReference type="PANTHER" id="PTHR21368">
    <property type="entry name" value="50S RIBOSOMAL PROTEIN L9"/>
    <property type="match status" value="1"/>
</dbReference>
<dbReference type="Pfam" id="PF03948">
    <property type="entry name" value="Ribosomal_L9_C"/>
    <property type="match status" value="1"/>
</dbReference>
<dbReference type="Pfam" id="PF01281">
    <property type="entry name" value="Ribosomal_L9_N"/>
    <property type="match status" value="1"/>
</dbReference>
<dbReference type="SUPFAM" id="SSF55658">
    <property type="entry name" value="L9 N-domain-like"/>
    <property type="match status" value="1"/>
</dbReference>
<dbReference type="SUPFAM" id="SSF55653">
    <property type="entry name" value="Ribosomal protein L9 C-domain"/>
    <property type="match status" value="1"/>
</dbReference>
<dbReference type="PROSITE" id="PS00651">
    <property type="entry name" value="RIBOSOMAL_L9"/>
    <property type="match status" value="1"/>
</dbReference>
<gene>
    <name evidence="1" type="primary">rplI</name>
    <name evidence="1" type="synonym">rpl9</name>
    <name type="ordered locus">Pro_1834</name>
</gene>
<sequence length="152" mass="16759">MAKRVKVVLKEDILSLGKDGDVVEVAPGYARNFLLSQQKALAVTPSVLKQVEYRLAKKAELEAAKKQEAIDFETALKTIGRFSIKKQTGEDGVLFGTVTNGDVSEAIQLATQKEIDRRNIIVPEIHETGKYKVQVKLHSEVTAEINLEVIGN</sequence>
<keyword id="KW-1185">Reference proteome</keyword>
<keyword id="KW-0687">Ribonucleoprotein</keyword>
<keyword id="KW-0689">Ribosomal protein</keyword>
<keyword id="KW-0694">RNA-binding</keyword>
<keyword id="KW-0699">rRNA-binding</keyword>
<reference key="1">
    <citation type="journal article" date="2003" name="Proc. Natl. Acad. Sci. U.S.A.">
        <title>Genome sequence of the cyanobacterium Prochlorococcus marinus SS120, a nearly minimal oxyphototrophic genome.</title>
        <authorList>
            <person name="Dufresne A."/>
            <person name="Salanoubat M."/>
            <person name="Partensky F."/>
            <person name="Artiguenave F."/>
            <person name="Axmann I.M."/>
            <person name="Barbe V."/>
            <person name="Duprat S."/>
            <person name="Galperin M.Y."/>
            <person name="Koonin E.V."/>
            <person name="Le Gall F."/>
            <person name="Makarova K.S."/>
            <person name="Ostrowski M."/>
            <person name="Oztas S."/>
            <person name="Robert C."/>
            <person name="Rogozin I.B."/>
            <person name="Scanlan D.J."/>
            <person name="Tandeau de Marsac N."/>
            <person name="Weissenbach J."/>
            <person name="Wincker P."/>
            <person name="Wolf Y.I."/>
            <person name="Hess W.R."/>
        </authorList>
    </citation>
    <scope>NUCLEOTIDE SEQUENCE [LARGE SCALE GENOMIC DNA]</scope>
    <source>
        <strain>SARG / CCMP1375 / SS120</strain>
    </source>
</reference>
<evidence type="ECO:0000255" key="1">
    <source>
        <dbReference type="HAMAP-Rule" id="MF_00503"/>
    </source>
</evidence>
<evidence type="ECO:0000305" key="2"/>
<organism>
    <name type="scientific">Prochlorococcus marinus (strain SARG / CCMP1375 / SS120)</name>
    <dbReference type="NCBI Taxonomy" id="167539"/>
    <lineage>
        <taxon>Bacteria</taxon>
        <taxon>Bacillati</taxon>
        <taxon>Cyanobacteriota</taxon>
        <taxon>Cyanophyceae</taxon>
        <taxon>Synechococcales</taxon>
        <taxon>Prochlorococcaceae</taxon>
        <taxon>Prochlorococcus</taxon>
    </lineage>
</organism>
<accession>Q7V9J9</accession>
<proteinExistence type="inferred from homology"/>
<comment type="function">
    <text evidence="1">Binds to the 23S rRNA.</text>
</comment>
<comment type="similarity">
    <text evidence="1">Belongs to the bacterial ribosomal protein bL9 family.</text>
</comment>
<feature type="chain" id="PRO_0000236564" description="Large ribosomal subunit protein bL9">
    <location>
        <begin position="1"/>
        <end position="152"/>
    </location>
</feature>